<feature type="chain" id="PRO_0000235820" description="Calmodulin-binding transcription activator 1">
    <location>
        <begin position="1"/>
        <end position="1673"/>
    </location>
</feature>
<feature type="domain" description="IPT/TIG" evidence="20">
    <location>
        <begin position="875"/>
        <end position="953"/>
    </location>
</feature>
<feature type="repeat" description="ANK 1">
    <location>
        <begin position="1064"/>
        <end position="1093"/>
    </location>
</feature>
<feature type="repeat" description="ANK 2">
    <location>
        <begin position="1109"/>
        <end position="1129"/>
    </location>
</feature>
<feature type="repeat" description="ANK 3">
    <location>
        <begin position="1143"/>
        <end position="1172"/>
    </location>
</feature>
<feature type="domain" description="IQ 1" evidence="1">
    <location>
        <begin position="1547"/>
        <end position="1576"/>
    </location>
</feature>
<feature type="domain" description="IQ 2" evidence="1">
    <location>
        <begin position="1577"/>
        <end position="1599"/>
    </location>
</feature>
<feature type="domain" description="IQ 3" evidence="1">
    <location>
        <begin position="1600"/>
        <end position="1622"/>
    </location>
</feature>
<feature type="DNA-binding region" description="CG-1" evidence="2">
    <location>
        <begin position="63"/>
        <end position="188"/>
    </location>
</feature>
<feature type="region of interest" description="Disordered" evidence="3">
    <location>
        <begin position="283"/>
        <end position="375"/>
    </location>
</feature>
<feature type="region of interest" description="Disordered" evidence="3">
    <location>
        <begin position="990"/>
        <end position="1021"/>
    </location>
</feature>
<feature type="region of interest" description="Disordered" evidence="3">
    <location>
        <begin position="1215"/>
        <end position="1246"/>
    </location>
</feature>
<feature type="region of interest" description="Disordered" evidence="3">
    <location>
        <begin position="1264"/>
        <end position="1317"/>
    </location>
</feature>
<feature type="short sequence motif" description="Nuclear localization signal" evidence="2">
    <location>
        <begin position="112"/>
        <end position="119"/>
    </location>
</feature>
<feature type="compositionally biased region" description="Basic and acidic residues" evidence="3">
    <location>
        <begin position="302"/>
        <end position="313"/>
    </location>
</feature>
<feature type="compositionally biased region" description="Polar residues" evidence="3">
    <location>
        <begin position="337"/>
        <end position="367"/>
    </location>
</feature>
<feature type="compositionally biased region" description="Gly residues" evidence="3">
    <location>
        <begin position="1003"/>
        <end position="1018"/>
    </location>
</feature>
<feature type="compositionally biased region" description="Polar residues" evidence="3">
    <location>
        <begin position="1273"/>
        <end position="1289"/>
    </location>
</feature>
<feature type="splice variant" id="VSP_046358" description="In isoform 4." evidence="10">
    <original>EIAAYLITFEKHEEWLTTSPKTR</original>
    <variation>ALTTHLFMGAAKKRDPQSWSHEG</variation>
    <location>
        <begin position="79"/>
        <end position="101"/>
    </location>
</feature>
<feature type="splice variant" id="VSP_043842" description="In isoform 3." evidence="10 11">
    <original>EI</original>
    <variation>RS</variation>
    <location>
        <begin position="79"/>
        <end position="80"/>
    </location>
</feature>
<feature type="splice variant" id="VSP_043843" description="In isoform 3." evidence="10 11">
    <location>
        <begin position="81"/>
        <end position="1673"/>
    </location>
</feature>
<feature type="splice variant" id="VSP_046359" description="In isoform 4." evidence="10">
    <location>
        <begin position="102"/>
        <end position="1673"/>
    </location>
</feature>
<feature type="splice variant" id="VSP_035936" description="In isoform 2." evidence="12 13">
    <location>
        <begin position="1458"/>
        <end position="1471"/>
    </location>
</feature>
<feature type="splice variant" id="VSP_035937" description="In isoform 2." evidence="12 13">
    <original>SPLVDHRLYKRSERIEKGQGT</original>
    <variation>RVKELKKAKELEDIQQHPLAM</variation>
    <location>
        <begin position="1653"/>
        <end position="1673"/>
    </location>
</feature>
<feature type="sequence variant" id="VAR_047824" description="In dbSNP:rs41278952." evidence="7">
    <original>N</original>
    <variation>K</variation>
    <location>
        <position position="1177"/>
    </location>
</feature>
<feature type="sequence variant" id="VAR_047825" description="In dbSNP:rs41278954." evidence="7">
    <original>N</original>
    <variation>T</variation>
    <location>
        <position position="1218"/>
    </location>
</feature>
<feature type="sequence variant" id="VAR_047826" description="In dbSNP:rs137974312." evidence="7">
    <original>T</original>
    <variation>I</variation>
    <location>
        <position position="1336"/>
    </location>
</feature>
<feature type="sequence variant" id="VAR_085043" description="Found in patients with late onset progressive myoclonus epilepsy; uncertain significance; dbSNP:rs776553769." evidence="9">
    <original>S</original>
    <variation>T</variation>
    <location>
        <position position="1473"/>
    </location>
</feature>
<feature type="strand" evidence="21">
    <location>
        <begin position="875"/>
        <end position="877"/>
    </location>
</feature>
<feature type="strand" evidence="21">
    <location>
        <begin position="879"/>
        <end position="881"/>
    </location>
</feature>
<feature type="strand" evidence="21">
    <location>
        <begin position="888"/>
        <end position="894"/>
    </location>
</feature>
<feature type="strand" evidence="21">
    <location>
        <begin position="902"/>
        <end position="906"/>
    </location>
</feature>
<feature type="strand" evidence="21">
    <location>
        <begin position="909"/>
        <end position="912"/>
    </location>
</feature>
<feature type="strand" evidence="21">
    <location>
        <begin position="914"/>
        <end position="917"/>
    </location>
</feature>
<feature type="strand" evidence="21">
    <location>
        <begin position="920"/>
        <end position="924"/>
    </location>
</feature>
<feature type="strand" evidence="21">
    <location>
        <begin position="930"/>
        <end position="939"/>
    </location>
</feature>
<feature type="strand" evidence="21">
    <location>
        <begin position="948"/>
        <end position="952"/>
    </location>
</feature>
<evidence type="ECO:0000255" key="1">
    <source>
        <dbReference type="PROSITE-ProRule" id="PRU00116"/>
    </source>
</evidence>
<evidence type="ECO:0000255" key="2">
    <source>
        <dbReference type="PROSITE-ProRule" id="PRU00767"/>
    </source>
</evidence>
<evidence type="ECO:0000256" key="3">
    <source>
        <dbReference type="SAM" id="MobiDB-lite"/>
    </source>
</evidence>
<evidence type="ECO:0000269" key="4">
    <source>
    </source>
</evidence>
<evidence type="ECO:0000269" key="5">
    <source>
    </source>
</evidence>
<evidence type="ECO:0000269" key="6">
    <source>
    </source>
</evidence>
<evidence type="ECO:0000269" key="7">
    <source>
    </source>
</evidence>
<evidence type="ECO:0000269" key="8">
    <source>
    </source>
</evidence>
<evidence type="ECO:0000269" key="9">
    <source>
    </source>
</evidence>
<evidence type="ECO:0000303" key="10">
    <source>
    </source>
</evidence>
<evidence type="ECO:0000303" key="11">
    <source ref="3"/>
</evidence>
<evidence type="ECO:0000303" key="12">
    <source ref="7"/>
</evidence>
<evidence type="ECO:0000303" key="13">
    <source ref="8"/>
</evidence>
<evidence type="ECO:0000305" key="14"/>
<evidence type="ECO:0000305" key="15">
    <source>
    </source>
</evidence>
<evidence type="ECO:0000305" key="16">
    <source>
    </source>
</evidence>
<evidence type="ECO:0000312" key="17">
    <source>
        <dbReference type="EMBL" id="AAL39006.1"/>
    </source>
</evidence>
<evidence type="ECO:0000312" key="18">
    <source>
        <dbReference type="EMBL" id="BAA74856.3"/>
    </source>
</evidence>
<evidence type="ECO:0000312" key="19">
    <source>
        <dbReference type="HGNC" id="HGNC:18806"/>
    </source>
</evidence>
<evidence type="ECO:0007744" key="20">
    <source>
        <dbReference type="PDB" id="2CXK"/>
    </source>
</evidence>
<evidence type="ECO:0007829" key="21">
    <source>
        <dbReference type="PDB" id="2CXK"/>
    </source>
</evidence>
<reference evidence="18" key="1">
    <citation type="journal article" date="1998" name="DNA Res.">
        <title>Prediction of the coding sequences of unidentified human genes. XII. The complete sequences of 100 new cDNA clones from brain which code for large proteins in vitro.</title>
        <authorList>
            <person name="Nagase T."/>
            <person name="Ishikawa K."/>
            <person name="Suyama M."/>
            <person name="Kikuno R."/>
            <person name="Hirosawa M."/>
            <person name="Miyajima N."/>
            <person name="Tanaka A."/>
            <person name="Kotani H."/>
            <person name="Nomura N."/>
            <person name="Ohara O."/>
        </authorList>
    </citation>
    <scope>NUCLEOTIDE SEQUENCE [LARGE SCALE MRNA] (ISOFORM 1)</scope>
    <source>
        <tissue>Brain</tissue>
    </source>
</reference>
<reference key="2">
    <citation type="journal article" date="2002" name="DNA Res.">
        <title>Construction of expression-ready cDNA clones for KIAA genes: manual curation of 330 KIAA cDNA clones.</title>
        <authorList>
            <person name="Nakajima D."/>
            <person name="Okazaki N."/>
            <person name="Yamakawa H."/>
            <person name="Kikuno R."/>
            <person name="Ohara O."/>
            <person name="Nagase T."/>
        </authorList>
    </citation>
    <scope>SEQUENCE REVISION</scope>
</reference>
<reference key="3">
    <citation type="submission" date="2001-05" db="EMBL/GenBank/DDBJ databases">
        <authorList>
            <person name="Li N."/>
            <person name="Zhang M."/>
            <person name="Wan T."/>
            <person name="Zhang W."/>
            <person name="Cao X."/>
        </authorList>
    </citation>
    <scope>NUCLEOTIDE SEQUENCE [MRNA] (ISOFORM 3)</scope>
</reference>
<reference key="4">
    <citation type="journal article" date="2006" name="Nature">
        <title>The DNA sequence and biological annotation of human chromosome 1.</title>
        <authorList>
            <person name="Gregory S.G."/>
            <person name="Barlow K.F."/>
            <person name="McLay K.E."/>
            <person name="Kaul R."/>
            <person name="Swarbreck D."/>
            <person name="Dunham A."/>
            <person name="Scott C.E."/>
            <person name="Howe K.L."/>
            <person name="Woodfine K."/>
            <person name="Spencer C.C.A."/>
            <person name="Jones M.C."/>
            <person name="Gillson C."/>
            <person name="Searle S."/>
            <person name="Zhou Y."/>
            <person name="Kokocinski F."/>
            <person name="McDonald L."/>
            <person name="Evans R."/>
            <person name="Phillips K."/>
            <person name="Atkinson A."/>
            <person name="Cooper R."/>
            <person name="Jones C."/>
            <person name="Hall R.E."/>
            <person name="Andrews T.D."/>
            <person name="Lloyd C."/>
            <person name="Ainscough R."/>
            <person name="Almeida J.P."/>
            <person name="Ambrose K.D."/>
            <person name="Anderson F."/>
            <person name="Andrew R.W."/>
            <person name="Ashwell R.I.S."/>
            <person name="Aubin K."/>
            <person name="Babbage A.K."/>
            <person name="Bagguley C.L."/>
            <person name="Bailey J."/>
            <person name="Beasley H."/>
            <person name="Bethel G."/>
            <person name="Bird C.P."/>
            <person name="Bray-Allen S."/>
            <person name="Brown J.Y."/>
            <person name="Brown A.J."/>
            <person name="Buckley D."/>
            <person name="Burton J."/>
            <person name="Bye J."/>
            <person name="Carder C."/>
            <person name="Chapman J.C."/>
            <person name="Clark S.Y."/>
            <person name="Clarke G."/>
            <person name="Clee C."/>
            <person name="Cobley V."/>
            <person name="Collier R.E."/>
            <person name="Corby N."/>
            <person name="Coville G.J."/>
            <person name="Davies J."/>
            <person name="Deadman R."/>
            <person name="Dunn M."/>
            <person name="Earthrowl M."/>
            <person name="Ellington A.G."/>
            <person name="Errington H."/>
            <person name="Frankish A."/>
            <person name="Frankland J."/>
            <person name="French L."/>
            <person name="Garner P."/>
            <person name="Garnett J."/>
            <person name="Gay L."/>
            <person name="Ghori M.R.J."/>
            <person name="Gibson R."/>
            <person name="Gilby L.M."/>
            <person name="Gillett W."/>
            <person name="Glithero R.J."/>
            <person name="Grafham D.V."/>
            <person name="Griffiths C."/>
            <person name="Griffiths-Jones S."/>
            <person name="Grocock R."/>
            <person name="Hammond S."/>
            <person name="Harrison E.S.I."/>
            <person name="Hart E."/>
            <person name="Haugen E."/>
            <person name="Heath P.D."/>
            <person name="Holmes S."/>
            <person name="Holt K."/>
            <person name="Howden P.J."/>
            <person name="Hunt A.R."/>
            <person name="Hunt S.E."/>
            <person name="Hunter G."/>
            <person name="Isherwood J."/>
            <person name="James R."/>
            <person name="Johnson C."/>
            <person name="Johnson D."/>
            <person name="Joy A."/>
            <person name="Kay M."/>
            <person name="Kershaw J.K."/>
            <person name="Kibukawa M."/>
            <person name="Kimberley A.M."/>
            <person name="King A."/>
            <person name="Knights A.J."/>
            <person name="Lad H."/>
            <person name="Laird G."/>
            <person name="Lawlor S."/>
            <person name="Leongamornlert D.A."/>
            <person name="Lloyd D.M."/>
            <person name="Loveland J."/>
            <person name="Lovell J."/>
            <person name="Lush M.J."/>
            <person name="Lyne R."/>
            <person name="Martin S."/>
            <person name="Mashreghi-Mohammadi M."/>
            <person name="Matthews L."/>
            <person name="Matthews N.S.W."/>
            <person name="McLaren S."/>
            <person name="Milne S."/>
            <person name="Mistry S."/>
            <person name="Moore M.J.F."/>
            <person name="Nickerson T."/>
            <person name="O'Dell C.N."/>
            <person name="Oliver K."/>
            <person name="Palmeiri A."/>
            <person name="Palmer S.A."/>
            <person name="Parker A."/>
            <person name="Patel D."/>
            <person name="Pearce A.V."/>
            <person name="Peck A.I."/>
            <person name="Pelan S."/>
            <person name="Phelps K."/>
            <person name="Phillimore B.J."/>
            <person name="Plumb R."/>
            <person name="Rajan J."/>
            <person name="Raymond C."/>
            <person name="Rouse G."/>
            <person name="Saenphimmachak C."/>
            <person name="Sehra H.K."/>
            <person name="Sheridan E."/>
            <person name="Shownkeen R."/>
            <person name="Sims S."/>
            <person name="Skuce C.D."/>
            <person name="Smith M."/>
            <person name="Steward C."/>
            <person name="Subramanian S."/>
            <person name="Sycamore N."/>
            <person name="Tracey A."/>
            <person name="Tromans A."/>
            <person name="Van Helmond Z."/>
            <person name="Wall M."/>
            <person name="Wallis J.M."/>
            <person name="White S."/>
            <person name="Whitehead S.L."/>
            <person name="Wilkinson J.E."/>
            <person name="Willey D.L."/>
            <person name="Williams H."/>
            <person name="Wilming L."/>
            <person name="Wray P.W."/>
            <person name="Wu Z."/>
            <person name="Coulson A."/>
            <person name="Vaudin M."/>
            <person name="Sulston J.E."/>
            <person name="Durbin R.M."/>
            <person name="Hubbard T."/>
            <person name="Wooster R."/>
            <person name="Dunham I."/>
            <person name="Carter N.P."/>
            <person name="McVean G."/>
            <person name="Ross M.T."/>
            <person name="Harrow J."/>
            <person name="Olson M.V."/>
            <person name="Beck S."/>
            <person name="Rogers J."/>
            <person name="Bentley D.R."/>
        </authorList>
    </citation>
    <scope>NUCLEOTIDE SEQUENCE [LARGE SCALE GENOMIC DNA]</scope>
</reference>
<reference key="5">
    <citation type="submission" date="2005-07" db="EMBL/GenBank/DDBJ databases">
        <authorList>
            <person name="Mural R.J."/>
            <person name="Istrail S."/>
            <person name="Sutton G.G."/>
            <person name="Florea L."/>
            <person name="Halpern A.L."/>
            <person name="Mobarry C.M."/>
            <person name="Lippert R."/>
            <person name="Walenz B."/>
            <person name="Shatkay H."/>
            <person name="Dew I."/>
            <person name="Miller J.R."/>
            <person name="Flanigan M.J."/>
            <person name="Edwards N.J."/>
            <person name="Bolanos R."/>
            <person name="Fasulo D."/>
            <person name="Halldorsson B.V."/>
            <person name="Hannenhalli S."/>
            <person name="Turner R."/>
            <person name="Yooseph S."/>
            <person name="Lu F."/>
            <person name="Nusskern D.R."/>
            <person name="Shue B.C."/>
            <person name="Zheng X.H."/>
            <person name="Zhong F."/>
            <person name="Delcher A.L."/>
            <person name="Huson D.H."/>
            <person name="Kravitz S.A."/>
            <person name="Mouchard L."/>
            <person name="Reinert K."/>
            <person name="Remington K.A."/>
            <person name="Clark A.G."/>
            <person name="Waterman M.S."/>
            <person name="Eichler E.E."/>
            <person name="Adams M.D."/>
            <person name="Hunkapiller M.W."/>
            <person name="Myers E.W."/>
            <person name="Venter J.C."/>
        </authorList>
    </citation>
    <scope>NUCLEOTIDE SEQUENCE [LARGE SCALE GENOMIC DNA]</scope>
</reference>
<reference key="6">
    <citation type="journal article" date="2004" name="Genome Res.">
        <title>The status, quality, and expansion of the NIH full-length cDNA project: the Mammalian Gene Collection (MGC).</title>
        <authorList>
            <consortium name="The MGC Project Team"/>
        </authorList>
    </citation>
    <scope>NUCLEOTIDE SEQUENCE [LARGE SCALE MRNA] (ISOFORMS 1; 3 AND 4)</scope>
    <source>
        <tissue>Skin</tissue>
    </source>
</reference>
<reference key="7">
    <citation type="submission" date="1998-12" db="EMBL/GenBank/DDBJ databases">
        <authorList>
            <person name="Xu Y.Y."/>
            <person name="Sun L.Z."/>
            <person name="Wu Q.Y."/>
            <person name="Liu Y.Q."/>
            <person name="Liu B."/>
            <person name="Zhao B."/>
            <person name="Wang X.Y."/>
            <person name="Song L."/>
            <person name="Ye J."/>
            <person name="Sheng H."/>
            <person name="Gao Y."/>
            <person name="Zhang C.L."/>
            <person name="Zhang J."/>
            <person name="Wei Y.J."/>
            <person name="Sun Y.H."/>
            <person name="Jiang Y.X."/>
            <person name="Zhao X.W."/>
            <person name="Liu S."/>
            <person name="Liu L.S."/>
            <person name="Ding J.F."/>
            <person name="Gao R.L."/>
            <person name="Qiang B.Q."/>
            <person name="Yuan J.G."/>
            <person name="Liew C.C."/>
            <person name="Zhao M.S."/>
            <person name="Hui R.T."/>
        </authorList>
    </citation>
    <scope>NUCLEOTIDE SEQUENCE [LARGE SCALE MRNA] OF 1422-1673 (ISOFORM 2)</scope>
    <source>
        <tissue>Heart</tissue>
    </source>
</reference>
<reference key="8">
    <citation type="submission" date="2003-07" db="EMBL/GenBank/DDBJ databases">
        <authorList>
            <person name="Li H."/>
            <person name="Li S."/>
            <person name="Yu R."/>
            <person name="Shen C."/>
            <person name="Zhou G."/>
            <person name="Ke R."/>
            <person name="Lin L."/>
            <person name="Yang S."/>
        </authorList>
    </citation>
    <scope>NUCLEOTIDE SEQUENCE [LARGE SCALE MRNA] OF 1437-1673 (ISOFORM 2)</scope>
</reference>
<reference key="9">
    <citation type="journal article" date="2002" name="J. Biol. Chem.">
        <title>A novel family of calmodulin-binding transcription activators in multicellular organisms.</title>
        <authorList>
            <person name="Bouche N."/>
            <person name="Scharlat A."/>
            <person name="Snedden W."/>
            <person name="Bouchez D."/>
            <person name="Fromm H."/>
        </authorList>
    </citation>
    <scope>FUNCTION</scope>
    <scope>SUBUNIT</scope>
    <scope>TISSUE SPECIFICITY</scope>
    <scope>SUBCELLULAR LOCATION</scope>
</reference>
<reference key="10">
    <citation type="journal article" date="2004" name="Int. J. Oncol.">
        <title>Cell cycle-dependent transcriptional regulation of calmodulin-binding transcription activator 1 in neuroblastoma cells.</title>
        <authorList>
            <person name="Nakatani K."/>
            <person name="Nishioka J."/>
            <person name="Itakura T."/>
            <person name="Nakanishi Y."/>
            <person name="Horinouchi J."/>
            <person name="Abe Y."/>
            <person name="Wada H."/>
            <person name="Nobori T."/>
        </authorList>
    </citation>
    <scope>INDUCTION</scope>
    <scope>SUBCELLULAR LOCATION</scope>
    <scope>TISSUE SPECIFICITY</scope>
</reference>
<reference key="11">
    <citation type="journal article" date="2005" name="Clin. Cancer Res.">
        <title>Allelic losses at 1p36 and 19q13 in gliomas: correlation with histologic classification, definition of a 150-kb minimal deleted region on 1p36, and evaluation of CAMTA1 as a candidate tumor suppressor gene.</title>
        <authorList>
            <person name="Barbashina V."/>
            <person name="Salazar P."/>
            <person name="Holland E.C."/>
            <person name="Rosenblum M.K."/>
            <person name="Ladanyi M."/>
        </authorList>
    </citation>
    <scope>FUNCTION</scope>
    <scope>TISSUE SPECIFICITY</scope>
</reference>
<reference key="12">
    <citation type="journal article" date="2012" name="J. Med. Genet.">
        <title>Intragenic CAMTA1 rearrangements cause non-progressive congenital ataxia with or without intellectual disability.</title>
        <authorList>
            <person name="Thevenon J."/>
            <person name="Lopez E."/>
            <person name="Keren B."/>
            <person name="Heron D."/>
            <person name="Mignot C."/>
            <person name="Altuzarra C."/>
            <person name="Beri-Dexheimer M."/>
            <person name="Bonnet C."/>
            <person name="Magnin E."/>
            <person name="Burglen L."/>
            <person name="Minot D."/>
            <person name="Vigneron J."/>
            <person name="Morle S."/>
            <person name="Anheim M."/>
            <person name="Charles P."/>
            <person name="Brice A."/>
            <person name="Gallagher L."/>
            <person name="Amiel J."/>
            <person name="Haffen E."/>
            <person name="Mach C."/>
            <person name="Depienne C."/>
            <person name="Doummar D."/>
            <person name="Bonnet M."/>
            <person name="Duplomb L."/>
            <person name="Carmignac V."/>
            <person name="Callier P."/>
            <person name="Marle N."/>
            <person name="Mosca-Boidron A.L."/>
            <person name="Roze V."/>
            <person name="Aral B."/>
            <person name="Razavi F."/>
            <person name="Jonveaux P."/>
            <person name="Faivre L."/>
            <person name="Thauvin-Robinet C."/>
        </authorList>
    </citation>
    <scope>INVOLVEMENT IN CECBA</scope>
</reference>
<reference key="13">
    <citation type="submission" date="2005-12" db="PDB data bank">
        <title>Crystal structure of the TIG domain of human calmodulin-binding transcription activator 1 (CAMTA1).</title>
        <authorList>
            <consortium name="RIKEN structural genomics initiative (RSGI)"/>
        </authorList>
    </citation>
    <scope>X-RAY CRYSTALLOGRAPHY (1.85 ANGSTROMS) OF 872-953</scope>
</reference>
<reference key="14">
    <citation type="journal article" date="2007" name="Eur. J. Cancer">
        <title>Allelic variants of CAMTA1 and FLJ10737 within a commonly deleted region at 1p36 in neuroblastoma.</title>
        <authorList>
            <person name="Henrich K.-O."/>
            <person name="Claas A."/>
            <person name="Praml C."/>
            <person name="Benner A."/>
            <person name="Mollenhauer J."/>
            <person name="Poustka A."/>
            <person name="Schwab M."/>
            <person name="Westermann F."/>
        </authorList>
    </citation>
    <scope>VARIANTS LYS-1177; THR-1218 AND ILE-1336</scope>
</reference>
<reference key="15">
    <citation type="journal article" date="2021" name="Am. J. Hum. Genet.">
        <title>Progressive myoclonus epilepsies-Residual unsolved cases have marked genetic heterogeneity including dolichol-dependent protein glycosylation pathway genes.</title>
        <authorList>
            <person name="Courage C."/>
            <person name="Oliver K.L."/>
            <person name="Park E.J."/>
            <person name="Cameron J.M."/>
            <person name="Grabinska K.A."/>
            <person name="Muona M."/>
            <person name="Canafoglia L."/>
            <person name="Gambardella A."/>
            <person name="Said E."/>
            <person name="Afawi Z."/>
            <person name="Baykan B."/>
            <person name="Brandt C."/>
            <person name="di Bonaventura C."/>
            <person name="Chew H.B."/>
            <person name="Criscuolo C."/>
            <person name="Dibbens L.M."/>
            <person name="Castellotti B."/>
            <person name="Riguzzi P."/>
            <person name="Labate A."/>
            <person name="Filla A."/>
            <person name="Giallonardo A.T."/>
            <person name="Berecki G."/>
            <person name="Jackson C.B."/>
            <person name="Joensuu T."/>
            <person name="Damiano J.A."/>
            <person name="Kivity S."/>
            <person name="Korczyn A."/>
            <person name="Palotie A."/>
            <person name="Striano P."/>
            <person name="Uccellini D."/>
            <person name="Giuliano L."/>
            <person name="Andermann E."/>
            <person name="Scheffer I.E."/>
            <person name="Michelucci R."/>
            <person name="Bahlo M."/>
            <person name="Franceschetti S."/>
            <person name="Sessa W.C."/>
            <person name="Berkovic S.F."/>
            <person name="Lehesjoki A.E."/>
        </authorList>
    </citation>
    <scope>VARIANT THR-1473</scope>
</reference>
<keyword id="KW-0002">3D-structure</keyword>
<keyword id="KW-0010">Activator</keyword>
<keyword id="KW-0025">Alternative splicing</keyword>
<keyword id="KW-0040">ANK repeat</keyword>
<keyword id="KW-0963">Cytoplasm</keyword>
<keyword id="KW-0991">Intellectual disability</keyword>
<keyword id="KW-0539">Nucleus</keyword>
<keyword id="KW-1267">Proteomics identification</keyword>
<keyword id="KW-1185">Reference proteome</keyword>
<keyword id="KW-0677">Repeat</keyword>
<keyword id="KW-0804">Transcription</keyword>
<keyword id="KW-0805">Transcription regulation</keyword>
<accession>Q9Y6Y1</accession>
<accession>A7MBM4</accession>
<accession>G3V3Z7</accession>
<accession>Q5VUE1</accession>
<accession>Q6V701</accession>
<accession>Q8WYI3</accession>
<accession>Q96S92</accession>
<organism>
    <name type="scientific">Homo sapiens</name>
    <name type="common">Human</name>
    <dbReference type="NCBI Taxonomy" id="9606"/>
    <lineage>
        <taxon>Eukaryota</taxon>
        <taxon>Metazoa</taxon>
        <taxon>Chordata</taxon>
        <taxon>Craniata</taxon>
        <taxon>Vertebrata</taxon>
        <taxon>Euteleostomi</taxon>
        <taxon>Mammalia</taxon>
        <taxon>Eutheria</taxon>
        <taxon>Euarchontoglires</taxon>
        <taxon>Primates</taxon>
        <taxon>Haplorrhini</taxon>
        <taxon>Catarrhini</taxon>
        <taxon>Hominidae</taxon>
        <taxon>Homo</taxon>
    </lineage>
</organism>
<name>CMTA1_HUMAN</name>
<sequence>MWRAEGKWLPKTSRKSVSQSVFCGTSTYCVLNTVPPIEDDHGNSNSSHVKIFLPKKLLECLPKCSSLPKERHRWNTNEEIAAYLITFEKHEEWLTTSPKTRPQNGSMILYNRKKVKYRKDGYCWKKRKDGKTTREDHMKLKVQGVECLYGCYVHSSIIPTFHRRCYWLLQNPDIVLVHYLNVPAIEDCGKPCGPILCSINTDKKEWAKWTKEELIGQLKPMFHGIKWTCSNGNSSSGFSVEQLVQQILDSHQTKPQPRTHNCLCTGSLGAGGSVHHKCNSAKHRIISPKVEPRTGGYGSHSEVQHNDVSEGKHEHSHSKGSSREKRNGKVAKPVLLHQSSTEVSSTNQVEVPDTTQSSPVSISSGLNSDPDMVDSPVVTGVSGMAVASVMGSLSQSATVFMSEVTNEAVYTMSPTAGPNHHLLSPDASQGLVLAVSSDGHKFAFPTTGSSESLSMLPTNVSEELVLSTTLDGGRKIPETTMNFDPDCFLNNPKQGQTYGGGGLKAEMVSSNIRHSPPGERSFSFTTVLTKEIKTEDTSFEQQMAKEAYSSSAAAVAASSLTLTAGSSLLPSGGGLSPSTTLEQMDFSAIDSNKDYTSSFSQTGHSPHIHQTPSPSFFLQDASKPLPVEQNTHSSLSDSGGTFVMPTVKTEASSQTSSCSGHVETRIESTSSLHLMQFQANFQAMTAEGEVTMETSQAAEGSEVLLKSGELQACSSEHYLQPETNGVIRSAGGVPILPGNVVQGLYPVAQPSLGNASNMELSLDHFDISFSNQFSDLINDFISVEGGSSTIYGHQLVSGDSTALSQSEDGARAPFTQAEMCLPCCSPQQGSLQLSSSEGGASTMAYMHVAEVVSAASAQGTLGMLQQSGRVFMVTDYSPEWSYPEGGVKVLITGPWQEASNNYSCLFDQISVPASLIQPGVLRCYCPAHDTGLVTLQVAFNNQIISNSVVFEYKARALPTLPSSQHDWLSLDDNQFRMSILERLEQMERRMAEMTGSQQHKQASGGGSSGGGSGSGNGGSQAQCASGTGALGSCFESRVVVVCEKMMSRACWAKSKHLIHSKTFRGMTLLHLAAAQGYATLIQTLIKWRTKHADSIDLELEVDPLNVDHFSCTPLMWACALGHLEAAVVLYKWDRRAISIPDSLGRLPLGIARSRGHVKLAECLEHLQRDEQAQLGQNPRIHCPASEEPSTESWMAQWHSEAISSPEIPKGVTVIASTNPELRRPRSEPSNYYSSESHKDYPAPKKHKLNPEYFQTRQEKLLPTALSLEEPNIRKQSPSSKQSVPETLSPSEGVRDFSRELSPPTPETAAFQASGSQPVGKWNSKDLYIGVSTVQVTGNPKGTSVGKEAAPSQVRPREPMSVLMMANREVVNTELGSYRDSAENEECGQPMDDIQVNMMTLAEHIIEATPDRIKQENFVPMESSGLERTDPATISSTMSWLASYLADADCLPSAAQIRSAYNEPLTPSSNTSLSPVGSPVSEIAFEKPNLPSAADWSEFLSASTSEKVENEFAQLTLSDHEQRELYEAARLVQTAFRKYKGRPLREQQEVAAAVIQRCYRKYKQYALYKKMTQAAILIQSKFRSYYEQKKFQQSRRAAVLIQKYYRSYKKCGKRRQARRTAVIVQQKLRSSLLTKKQDQAARKIMRFLRRCRHSPLVDHRLYKRSERIEKGQGT</sequence>
<gene>
    <name evidence="19" type="primary">CAMTA1</name>
    <name evidence="18" type="synonym">KIAA0833</name>
    <name evidence="17" type="ORF">MSTP023</name>
</gene>
<comment type="function">
    <text evidence="4">Transcriptional activator.</text>
</comment>
<comment type="subunit">
    <text evidence="15">May interact with calmodulin.</text>
</comment>
<comment type="subcellular location">
    <subcellularLocation>
        <location evidence="15">Nucleus</location>
    </subcellularLocation>
    <subcellularLocation>
        <location evidence="16">Cytoplasm</location>
    </subcellularLocation>
</comment>
<comment type="alternative products">
    <event type="alternative splicing"/>
    <isoform>
        <id>Q9Y6Y1-1</id>
        <name>1</name>
        <sequence type="displayed"/>
    </isoform>
    <isoform>
        <id>Q9Y6Y1-2</id>
        <name>2</name>
        <sequence type="described" ref="VSP_035936 VSP_035937"/>
    </isoform>
    <isoform>
        <id>Q9Y6Y1-3</id>
        <name>3</name>
        <sequence type="described" ref="VSP_043842 VSP_043843"/>
    </isoform>
    <isoform>
        <id>Q9Y6Y1-4</id>
        <name>4</name>
        <sequence type="described" ref="VSP_046358 VSP_046359"/>
    </isoform>
</comment>
<comment type="tissue specificity">
    <text evidence="4 5 6">Normally expressed in non-neoplastic adult central nervous system tissues: detected in whole brain, cerebellum, brain cortex, occipital lobe, frontal lobe, temporal lobe, putamen. Expression levels are low in oligodendroglial tumors, and are reduced by half in oligodendroglioma and astrocytoma cases with 1p loss of heterozygosity. Detected in neuroblastic-type cultured neuroblastoma cells. Expressed in heart and kidney.</text>
</comment>
<comment type="induction">
    <text evidence="5">Detected at low levels at interphase and in resting cells. Up-regulated during S phase and mitosis. Levels decrease at the end of mitosis.</text>
</comment>
<comment type="disease" evidence="8">
    <disease id="DI-03530">
        <name>Cerebellar dysfunction with variable cognitive and behavioral abnormalities</name>
        <acronym>CECBA</acronym>
        <description>An autosomal dominant neurodevelopmental disorder characterized by mildly delayed psychomotor development, early onset of cerebellar ataxia, and intellectual disability later in childhood and adult life. Other features may include neonatal hypotonia, dysarthria, and dysmetria. Brain imaging in some patients shows cerebellar atrophy. Dysmorphic facial features are variable.</description>
        <dbReference type="MIM" id="614756"/>
    </disease>
    <text>The disease is caused by variants affecting the gene represented in this entry.</text>
</comment>
<comment type="miscellaneous">
    <text>A very small segment of 1p36 located within CAMTA1 is deleted in all oligodendroglial tumors with 1p LOH. This minimal deleted region (MDR) also overlaps the neuroblastoma 1p36 MDR. CAMTA1 shows no evidence of inactivation by somatic mutations.</text>
</comment>
<comment type="similarity">
    <text evidence="14">Belongs to the CAMTA family.</text>
</comment>
<comment type="sequence caution" evidence="14">
    <conflict type="erroneous initiation">
        <sequence resource="EMBL-CDS" id="AAL39006"/>
    </conflict>
    <text>Truncated N-terminus.</text>
</comment>
<comment type="sequence caution" evidence="14">
    <conflict type="erroneous initiation">
        <sequence resource="EMBL-CDS" id="BAA74856"/>
    </conflict>
    <text>Extended N-terminus.</text>
</comment>
<comment type="sequence caution" evidence="14">
    <conflict type="erroneous gene model prediction">
        <sequence resource="EMBL-CDS" id="EAW71580"/>
    </conflict>
</comment>
<comment type="online information" name="Atlas of Genetics and Cytogenetics in Oncology and Haematology">
    <link uri="https://atlasgeneticsoncology.org/gene/908/CAMTA1"/>
</comment>
<protein>
    <recommendedName>
        <fullName evidence="19">Calmodulin-binding transcription activator 1</fullName>
    </recommendedName>
</protein>
<dbReference type="EMBL" id="AB020640">
    <property type="protein sequence ID" value="BAA74856.3"/>
    <property type="status" value="ALT_INIT"/>
    <property type="molecule type" value="mRNA"/>
</dbReference>
<dbReference type="EMBL" id="AY037153">
    <property type="protein sequence ID" value="AAK67633.1"/>
    <property type="molecule type" value="mRNA"/>
</dbReference>
<dbReference type="EMBL" id="AL359881">
    <property type="status" value="NOT_ANNOTATED_CDS"/>
    <property type="molecule type" value="Genomic_DNA"/>
</dbReference>
<dbReference type="EMBL" id="AL365194">
    <property type="status" value="NOT_ANNOTATED_CDS"/>
    <property type="molecule type" value="Genomic_DNA"/>
</dbReference>
<dbReference type="EMBL" id="AL590128">
    <property type="status" value="NOT_ANNOTATED_CDS"/>
    <property type="molecule type" value="Genomic_DNA"/>
</dbReference>
<dbReference type="EMBL" id="AL596210">
    <property type="status" value="NOT_ANNOTATED_CDS"/>
    <property type="molecule type" value="Genomic_DNA"/>
</dbReference>
<dbReference type="EMBL" id="Z97635">
    <property type="status" value="NOT_ANNOTATED_CDS"/>
    <property type="molecule type" value="Genomic_DNA"/>
</dbReference>
<dbReference type="EMBL" id="Z98052">
    <property type="status" value="NOT_ANNOTATED_CDS"/>
    <property type="molecule type" value="Genomic_DNA"/>
</dbReference>
<dbReference type="EMBL" id="Z98884">
    <property type="status" value="NOT_ANNOTATED_CDS"/>
    <property type="molecule type" value="Genomic_DNA"/>
</dbReference>
<dbReference type="EMBL" id="CH471130">
    <property type="protein sequence ID" value="EAW71580.1"/>
    <property type="status" value="ALT_SEQ"/>
    <property type="molecule type" value="Genomic_DNA"/>
</dbReference>
<dbReference type="EMBL" id="BC116457">
    <property type="protein sequence ID" value="AAI16458.1"/>
    <property type="molecule type" value="mRNA"/>
</dbReference>
<dbReference type="EMBL" id="BC151835">
    <property type="protein sequence ID" value="AAI51836.1"/>
    <property type="molecule type" value="mRNA"/>
</dbReference>
<dbReference type="EMBL" id="CD103791">
    <property type="status" value="NOT_ANNOTATED_CDS"/>
    <property type="molecule type" value="mRNA"/>
</dbReference>
<dbReference type="EMBL" id="AF111804">
    <property type="protein sequence ID" value="AAL39006.1"/>
    <property type="status" value="ALT_INIT"/>
    <property type="molecule type" value="mRNA"/>
</dbReference>
<dbReference type="EMBL" id="AY349360">
    <property type="protein sequence ID" value="AAQ56724.1"/>
    <property type="molecule type" value="mRNA"/>
</dbReference>
<dbReference type="CCDS" id="CCDS30576.1">
    <molecule id="Q9Y6Y1-1"/>
</dbReference>
<dbReference type="CCDS" id="CCDS55574.1">
    <molecule id="Q9Y6Y1-3"/>
</dbReference>
<dbReference type="CCDS" id="CCDS55575.1">
    <molecule id="Q9Y6Y1-4"/>
</dbReference>
<dbReference type="RefSeq" id="NP_001182492.1">
    <molecule id="Q9Y6Y1-3"/>
    <property type="nucleotide sequence ID" value="NM_001195563.2"/>
</dbReference>
<dbReference type="RefSeq" id="NP_001229630.1">
    <molecule id="Q9Y6Y1-4"/>
    <property type="nucleotide sequence ID" value="NM_001242701.2"/>
</dbReference>
<dbReference type="RefSeq" id="NP_056030.1">
    <molecule id="Q9Y6Y1-1"/>
    <property type="nucleotide sequence ID" value="NM_015215.4"/>
</dbReference>
<dbReference type="PDB" id="2CXK">
    <property type="method" value="X-ray"/>
    <property type="resolution" value="1.85 A"/>
    <property type="chains" value="A/B/C/D/E=872-953"/>
</dbReference>
<dbReference type="PDBsum" id="2CXK"/>
<dbReference type="SMR" id="Q9Y6Y1"/>
<dbReference type="BioGRID" id="116863">
    <property type="interactions" value="9"/>
</dbReference>
<dbReference type="FunCoup" id="Q9Y6Y1">
    <property type="interactions" value="2945"/>
</dbReference>
<dbReference type="IntAct" id="Q9Y6Y1">
    <property type="interactions" value="7"/>
</dbReference>
<dbReference type="STRING" id="9606.ENSP00000306522"/>
<dbReference type="GlyGen" id="Q9Y6Y1">
    <property type="glycosylation" value="1 site"/>
</dbReference>
<dbReference type="iPTMnet" id="Q9Y6Y1"/>
<dbReference type="PhosphoSitePlus" id="Q9Y6Y1"/>
<dbReference type="BioMuta" id="CAMTA1"/>
<dbReference type="DMDM" id="97046872"/>
<dbReference type="jPOST" id="Q9Y6Y1"/>
<dbReference type="MassIVE" id="Q9Y6Y1"/>
<dbReference type="PaxDb" id="9606-ENSP00000306522"/>
<dbReference type="PeptideAtlas" id="Q9Y6Y1"/>
<dbReference type="ProteomicsDB" id="33093"/>
<dbReference type="ProteomicsDB" id="86825">
    <molecule id="Q9Y6Y1-1"/>
</dbReference>
<dbReference type="ProteomicsDB" id="86826">
    <molecule id="Q9Y6Y1-2"/>
</dbReference>
<dbReference type="ProteomicsDB" id="86827">
    <molecule id="Q9Y6Y1-3"/>
</dbReference>
<dbReference type="Antibodypedia" id="49059">
    <property type="antibodies" value="60 antibodies from 18 providers"/>
</dbReference>
<dbReference type="DNASU" id="23261"/>
<dbReference type="Ensembl" id="ENST00000303635.12">
    <molecule id="Q9Y6Y1-1"/>
    <property type="protein sequence ID" value="ENSP00000306522.6"/>
    <property type="gene ID" value="ENSG00000171735.21"/>
</dbReference>
<dbReference type="Ensembl" id="ENST00000473578.5">
    <molecule id="Q9Y6Y1-3"/>
    <property type="protein sequence ID" value="ENSP00000451388.1"/>
    <property type="gene ID" value="ENSG00000171735.21"/>
</dbReference>
<dbReference type="Ensembl" id="ENST00000557126.5">
    <molecule id="Q9Y6Y1-4"/>
    <property type="protein sequence ID" value="ENSP00000451510.1"/>
    <property type="gene ID" value="ENSG00000171735.21"/>
</dbReference>
<dbReference type="GeneID" id="23261"/>
<dbReference type="KEGG" id="hsa:23261"/>
<dbReference type="MANE-Select" id="ENST00000303635.12">
    <property type="protein sequence ID" value="ENSP00000306522.6"/>
    <property type="RefSeq nucleotide sequence ID" value="NM_015215.4"/>
    <property type="RefSeq protein sequence ID" value="NP_056030.1"/>
</dbReference>
<dbReference type="UCSC" id="uc001aoh.4">
    <molecule id="Q9Y6Y1-1"/>
    <property type="organism name" value="human"/>
</dbReference>
<dbReference type="AGR" id="HGNC:18806"/>
<dbReference type="CTD" id="23261"/>
<dbReference type="DisGeNET" id="23261"/>
<dbReference type="GeneCards" id="CAMTA1"/>
<dbReference type="HGNC" id="HGNC:18806">
    <property type="gene designation" value="CAMTA1"/>
</dbReference>
<dbReference type="HPA" id="ENSG00000171735">
    <property type="expression patterns" value="Low tissue specificity"/>
</dbReference>
<dbReference type="MalaCards" id="CAMTA1"/>
<dbReference type="MIM" id="611501">
    <property type="type" value="gene"/>
</dbReference>
<dbReference type="MIM" id="614756">
    <property type="type" value="phenotype"/>
</dbReference>
<dbReference type="neXtProt" id="NX_Q9Y6Y1"/>
<dbReference type="OpenTargets" id="ENSG00000171735"/>
<dbReference type="Orphanet" id="157791">
    <property type="disease" value="Epithelioid hemangioendothelioma"/>
</dbReference>
<dbReference type="Orphanet" id="314647">
    <property type="disease" value="Non-progressive cerebellar ataxia with intellectual disability"/>
</dbReference>
<dbReference type="PharmGKB" id="PA38688"/>
<dbReference type="VEuPathDB" id="HostDB:ENSG00000171735"/>
<dbReference type="eggNOG" id="KOG0520">
    <property type="taxonomic scope" value="Eukaryota"/>
</dbReference>
<dbReference type="GeneTree" id="ENSGT00940000155203"/>
<dbReference type="HOGENOM" id="CLU_003170_1_0_1"/>
<dbReference type="InParanoid" id="Q9Y6Y1"/>
<dbReference type="OMA" id="GCANYSA"/>
<dbReference type="OrthoDB" id="9604667at2759"/>
<dbReference type="PAN-GO" id="Q9Y6Y1">
    <property type="GO annotations" value="4 GO annotations based on evolutionary models"/>
</dbReference>
<dbReference type="PhylomeDB" id="Q9Y6Y1"/>
<dbReference type="TreeFam" id="TF323452"/>
<dbReference type="PathwayCommons" id="Q9Y6Y1"/>
<dbReference type="SignaLink" id="Q9Y6Y1"/>
<dbReference type="SIGNOR" id="Q9Y6Y1"/>
<dbReference type="BioGRID-ORCS" id="23261">
    <property type="hits" value="8 hits in 1175 CRISPR screens"/>
</dbReference>
<dbReference type="ChiTaRS" id="CAMTA1">
    <property type="organism name" value="human"/>
</dbReference>
<dbReference type="EvolutionaryTrace" id="Q9Y6Y1"/>
<dbReference type="GeneWiki" id="CAMTA1"/>
<dbReference type="GenomeRNAi" id="23261"/>
<dbReference type="Pharos" id="Q9Y6Y1">
    <property type="development level" value="Tbio"/>
</dbReference>
<dbReference type="PRO" id="PR:Q9Y6Y1"/>
<dbReference type="Proteomes" id="UP000005640">
    <property type="component" value="Chromosome 1"/>
</dbReference>
<dbReference type="RNAct" id="Q9Y6Y1">
    <property type="molecule type" value="protein"/>
</dbReference>
<dbReference type="Bgee" id="ENSG00000171735">
    <property type="expression patterns" value="Expressed in parotid gland and 195 other cell types or tissues"/>
</dbReference>
<dbReference type="ExpressionAtlas" id="Q9Y6Y1">
    <property type="expression patterns" value="baseline and differential"/>
</dbReference>
<dbReference type="GO" id="GO:0005737">
    <property type="term" value="C:cytoplasm"/>
    <property type="evidence" value="ECO:0007669"/>
    <property type="project" value="UniProtKB-SubCell"/>
</dbReference>
<dbReference type="GO" id="GO:0005634">
    <property type="term" value="C:nucleus"/>
    <property type="evidence" value="ECO:0000318"/>
    <property type="project" value="GO_Central"/>
</dbReference>
<dbReference type="GO" id="GO:0003690">
    <property type="term" value="F:double-stranded DNA binding"/>
    <property type="evidence" value="ECO:0000318"/>
    <property type="project" value="GO_Central"/>
</dbReference>
<dbReference type="GO" id="GO:0043565">
    <property type="term" value="F:sequence-specific DNA binding"/>
    <property type="evidence" value="ECO:0007669"/>
    <property type="project" value="Ensembl"/>
</dbReference>
<dbReference type="GO" id="GO:0003712">
    <property type="term" value="F:transcription coregulator activity"/>
    <property type="evidence" value="ECO:0000318"/>
    <property type="project" value="GO_Central"/>
</dbReference>
<dbReference type="GO" id="GO:0050885">
    <property type="term" value="P:neuromuscular process controlling balance"/>
    <property type="evidence" value="ECO:0007669"/>
    <property type="project" value="Ensembl"/>
</dbReference>
<dbReference type="GO" id="GO:0070886">
    <property type="term" value="P:positive regulation of calcineurin-NFAT signaling cascade"/>
    <property type="evidence" value="ECO:0000315"/>
    <property type="project" value="BHF-UCL"/>
</dbReference>
<dbReference type="GO" id="GO:0045944">
    <property type="term" value="P:positive regulation of transcription by RNA polymerase II"/>
    <property type="evidence" value="ECO:0007669"/>
    <property type="project" value="Ensembl"/>
</dbReference>
<dbReference type="GO" id="GO:0006357">
    <property type="term" value="P:regulation of transcription by RNA polymerase II"/>
    <property type="evidence" value="ECO:0000318"/>
    <property type="project" value="GO_Central"/>
</dbReference>
<dbReference type="CDD" id="cd23767">
    <property type="entry name" value="IQCD"/>
    <property type="match status" value="1"/>
</dbReference>
<dbReference type="FunFam" id="1.20.5.190:FF:000038">
    <property type="entry name" value="calmodulin-binding transcription activator 1 isoform X2"/>
    <property type="match status" value="1"/>
</dbReference>
<dbReference type="FunFam" id="1.25.40.20:FF:000165">
    <property type="entry name" value="calmodulin-binding transcription activator 1 isoform X2"/>
    <property type="match status" value="1"/>
</dbReference>
<dbReference type="FunFam" id="2.60.40.10:FF:000089">
    <property type="entry name" value="calmodulin-binding transcription activator 2 isoform X1"/>
    <property type="match status" value="1"/>
</dbReference>
<dbReference type="Gene3D" id="1.20.5.190">
    <property type="match status" value="1"/>
</dbReference>
<dbReference type="Gene3D" id="1.25.40.20">
    <property type="entry name" value="Ankyrin repeat-containing domain"/>
    <property type="match status" value="1"/>
</dbReference>
<dbReference type="Gene3D" id="2.60.40.10">
    <property type="entry name" value="Immunoglobulins"/>
    <property type="match status" value="1"/>
</dbReference>
<dbReference type="InterPro" id="IPR002110">
    <property type="entry name" value="Ankyrin_rpt"/>
</dbReference>
<dbReference type="InterPro" id="IPR036770">
    <property type="entry name" value="Ankyrin_rpt-contain_sf"/>
</dbReference>
<dbReference type="InterPro" id="IPR005559">
    <property type="entry name" value="CG-1_dom"/>
</dbReference>
<dbReference type="InterPro" id="IPR013783">
    <property type="entry name" value="Ig-like_fold"/>
</dbReference>
<dbReference type="InterPro" id="IPR014756">
    <property type="entry name" value="Ig_E-set"/>
</dbReference>
<dbReference type="InterPro" id="IPR002909">
    <property type="entry name" value="IPT_dom"/>
</dbReference>
<dbReference type="InterPro" id="IPR000048">
    <property type="entry name" value="IQ_motif_EF-hand-BS"/>
</dbReference>
<dbReference type="InterPro" id="IPR027417">
    <property type="entry name" value="P-loop_NTPase"/>
</dbReference>
<dbReference type="PANTHER" id="PTHR23335:SF11">
    <property type="entry name" value="CALMODULIN-BINDING TRANSCRIPTION ACTIVATOR 1"/>
    <property type="match status" value="1"/>
</dbReference>
<dbReference type="PANTHER" id="PTHR23335">
    <property type="entry name" value="CALMODULIN-BINDING TRANSCRIPTION ACTIVATOR CAMTA"/>
    <property type="match status" value="1"/>
</dbReference>
<dbReference type="Pfam" id="PF12796">
    <property type="entry name" value="Ank_2"/>
    <property type="match status" value="1"/>
</dbReference>
<dbReference type="Pfam" id="PF03859">
    <property type="entry name" value="CG-1"/>
    <property type="match status" value="1"/>
</dbReference>
<dbReference type="Pfam" id="PF00612">
    <property type="entry name" value="IQ"/>
    <property type="match status" value="1"/>
</dbReference>
<dbReference type="Pfam" id="PF01833">
    <property type="entry name" value="TIG"/>
    <property type="match status" value="1"/>
</dbReference>
<dbReference type="SMART" id="SM01076">
    <property type="entry name" value="CG-1"/>
    <property type="match status" value="1"/>
</dbReference>
<dbReference type="SUPFAM" id="SSF48403">
    <property type="entry name" value="Ankyrin repeat"/>
    <property type="match status" value="1"/>
</dbReference>
<dbReference type="SUPFAM" id="SSF81296">
    <property type="entry name" value="E set domains"/>
    <property type="match status" value="1"/>
</dbReference>
<dbReference type="SUPFAM" id="SSF52540">
    <property type="entry name" value="P-loop containing nucleoside triphosphate hydrolases"/>
    <property type="match status" value="1"/>
</dbReference>
<dbReference type="PROSITE" id="PS50297">
    <property type="entry name" value="ANK_REP_REGION"/>
    <property type="match status" value="1"/>
</dbReference>
<dbReference type="PROSITE" id="PS50088">
    <property type="entry name" value="ANK_REPEAT"/>
    <property type="match status" value="1"/>
</dbReference>
<dbReference type="PROSITE" id="PS51437">
    <property type="entry name" value="CG_1"/>
    <property type="match status" value="1"/>
</dbReference>
<dbReference type="PROSITE" id="PS50096">
    <property type="entry name" value="IQ"/>
    <property type="match status" value="1"/>
</dbReference>
<proteinExistence type="evidence at protein level"/>